<evidence type="ECO:0000255" key="1">
    <source>
        <dbReference type="HAMAP-Rule" id="MF_00144"/>
    </source>
</evidence>
<accession>Q6NHQ7</accession>
<organism>
    <name type="scientific">Corynebacterium diphtheriae (strain ATCC 700971 / NCTC 13129 / Biotype gravis)</name>
    <dbReference type="NCBI Taxonomy" id="257309"/>
    <lineage>
        <taxon>Bacteria</taxon>
        <taxon>Bacillati</taxon>
        <taxon>Actinomycetota</taxon>
        <taxon>Actinomycetes</taxon>
        <taxon>Mycobacteriales</taxon>
        <taxon>Corynebacteriaceae</taxon>
        <taxon>Corynebacterium</taxon>
    </lineage>
</organism>
<comment type="function">
    <text evidence="1">Catalyzes the 2-thiolation of uridine at the wobble position (U34) of tRNA, leading to the formation of s(2)U34.</text>
</comment>
<comment type="catalytic activity">
    <reaction evidence="1">
        <text>S-sulfanyl-L-cysteinyl-[protein] + uridine(34) in tRNA + AH2 + ATP = 2-thiouridine(34) in tRNA + L-cysteinyl-[protein] + A + AMP + diphosphate + H(+)</text>
        <dbReference type="Rhea" id="RHEA:47032"/>
        <dbReference type="Rhea" id="RHEA-COMP:10131"/>
        <dbReference type="Rhea" id="RHEA-COMP:11726"/>
        <dbReference type="Rhea" id="RHEA-COMP:11727"/>
        <dbReference type="Rhea" id="RHEA-COMP:11728"/>
        <dbReference type="ChEBI" id="CHEBI:13193"/>
        <dbReference type="ChEBI" id="CHEBI:15378"/>
        <dbReference type="ChEBI" id="CHEBI:17499"/>
        <dbReference type="ChEBI" id="CHEBI:29950"/>
        <dbReference type="ChEBI" id="CHEBI:30616"/>
        <dbReference type="ChEBI" id="CHEBI:33019"/>
        <dbReference type="ChEBI" id="CHEBI:61963"/>
        <dbReference type="ChEBI" id="CHEBI:65315"/>
        <dbReference type="ChEBI" id="CHEBI:87170"/>
        <dbReference type="ChEBI" id="CHEBI:456215"/>
        <dbReference type="EC" id="2.8.1.13"/>
    </reaction>
</comment>
<comment type="subcellular location">
    <subcellularLocation>
        <location evidence="1">Cytoplasm</location>
    </subcellularLocation>
</comment>
<comment type="similarity">
    <text evidence="1">Belongs to the MnmA/TRMU family.</text>
</comment>
<sequence length="366" mass="39295">MRVLAAMSGGVDSAVAAARAVAAGHDVVGVHLALSQDPQTVRESSRGCCSLEDSADARRVCDKLGIPFYVWDFSDRFKEDVIDDFISSYEAGETPNPCLRCNEKIKFAALLERGIALGFDAVVTGHYARLTQPVDGGDGYLRRSIDPDKDQSYVLGVLGAHEIAHCMFPVGDTVKPKIREEAAAMGFSVAKKPDSYDICFIPDGNTQAFLGRHIGLRPGMIVDSDGNELKEHDGAWNYTIGQRKGLDIKQPAADGKPRYVTNIDAATGTVTVGSRENLKVIALTADRLKYLHPAMTGSFEAEVQVRAHGSVVACSVMVNESDDTMRVELHTPLSGVARGQAAVIYLPDDDGDIVLGSGTICATEHQ</sequence>
<protein>
    <recommendedName>
        <fullName evidence="1">tRNA-specific 2-thiouridylase MnmA</fullName>
        <ecNumber evidence="1">2.8.1.13</ecNumber>
    </recommendedName>
</protein>
<gene>
    <name evidence="1" type="primary">mnmA</name>
    <name type="synonym">trmU</name>
    <name type="ordered locus">DIP1074</name>
</gene>
<name>MNMA_CORDI</name>
<keyword id="KW-0067">ATP-binding</keyword>
<keyword id="KW-0963">Cytoplasm</keyword>
<keyword id="KW-1015">Disulfide bond</keyword>
<keyword id="KW-0547">Nucleotide-binding</keyword>
<keyword id="KW-1185">Reference proteome</keyword>
<keyword id="KW-0694">RNA-binding</keyword>
<keyword id="KW-0808">Transferase</keyword>
<keyword id="KW-0819">tRNA processing</keyword>
<keyword id="KW-0820">tRNA-binding</keyword>
<proteinExistence type="inferred from homology"/>
<feature type="chain" id="PRO_0000121628" description="tRNA-specific 2-thiouridylase MnmA">
    <location>
        <begin position="1"/>
        <end position="366"/>
    </location>
</feature>
<feature type="region of interest" description="Interaction with tRNA" evidence="1">
    <location>
        <begin position="149"/>
        <end position="151"/>
    </location>
</feature>
<feature type="active site" description="Nucleophile" evidence="1">
    <location>
        <position position="101"/>
    </location>
</feature>
<feature type="active site" description="Cysteine persulfide intermediate" evidence="1">
    <location>
        <position position="199"/>
    </location>
</feature>
<feature type="binding site" evidence="1">
    <location>
        <begin position="6"/>
        <end position="13"/>
    </location>
    <ligand>
        <name>ATP</name>
        <dbReference type="ChEBI" id="CHEBI:30616"/>
    </ligand>
</feature>
<feature type="binding site" evidence="1">
    <location>
        <position position="32"/>
    </location>
    <ligand>
        <name>ATP</name>
        <dbReference type="ChEBI" id="CHEBI:30616"/>
    </ligand>
</feature>
<feature type="binding site" evidence="1">
    <location>
        <position position="125"/>
    </location>
    <ligand>
        <name>ATP</name>
        <dbReference type="ChEBI" id="CHEBI:30616"/>
    </ligand>
</feature>
<feature type="site" description="Interaction with tRNA" evidence="1">
    <location>
        <position position="126"/>
    </location>
</feature>
<feature type="site" description="Interaction with tRNA" evidence="1">
    <location>
        <position position="340"/>
    </location>
</feature>
<feature type="disulfide bond" description="Alternate" evidence="1">
    <location>
        <begin position="101"/>
        <end position="199"/>
    </location>
</feature>
<reference key="1">
    <citation type="journal article" date="2003" name="Nucleic Acids Res.">
        <title>The complete genome sequence and analysis of Corynebacterium diphtheriae NCTC13129.</title>
        <authorList>
            <person name="Cerdeno-Tarraga A.-M."/>
            <person name="Efstratiou A."/>
            <person name="Dover L.G."/>
            <person name="Holden M.T.G."/>
            <person name="Pallen M.J."/>
            <person name="Bentley S.D."/>
            <person name="Besra G.S."/>
            <person name="Churcher C.M."/>
            <person name="James K.D."/>
            <person name="De Zoysa A."/>
            <person name="Chillingworth T."/>
            <person name="Cronin A."/>
            <person name="Dowd L."/>
            <person name="Feltwell T."/>
            <person name="Hamlin N."/>
            <person name="Holroyd S."/>
            <person name="Jagels K."/>
            <person name="Moule S."/>
            <person name="Quail M.A."/>
            <person name="Rabbinowitsch E."/>
            <person name="Rutherford K.M."/>
            <person name="Thomson N.R."/>
            <person name="Unwin L."/>
            <person name="Whitehead S."/>
            <person name="Barrell B.G."/>
            <person name="Parkhill J."/>
        </authorList>
    </citation>
    <scope>NUCLEOTIDE SEQUENCE [LARGE SCALE GENOMIC DNA]</scope>
    <source>
        <strain>ATCC 700971 / NCTC 13129 / Biotype gravis</strain>
    </source>
</reference>
<dbReference type="EC" id="2.8.1.13" evidence="1"/>
<dbReference type="EMBL" id="BX248357">
    <property type="protein sequence ID" value="CAE49597.1"/>
    <property type="molecule type" value="Genomic_DNA"/>
</dbReference>
<dbReference type="RefSeq" id="WP_010934788.1">
    <property type="nucleotide sequence ID" value="NC_002935.2"/>
</dbReference>
<dbReference type="SMR" id="Q6NHQ7"/>
<dbReference type="STRING" id="257309.DIP1074"/>
<dbReference type="KEGG" id="cdi:DIP1074"/>
<dbReference type="HOGENOM" id="CLU_035188_0_2_11"/>
<dbReference type="Proteomes" id="UP000002198">
    <property type="component" value="Chromosome"/>
</dbReference>
<dbReference type="GO" id="GO:0005737">
    <property type="term" value="C:cytoplasm"/>
    <property type="evidence" value="ECO:0007669"/>
    <property type="project" value="UniProtKB-SubCell"/>
</dbReference>
<dbReference type="GO" id="GO:0005524">
    <property type="term" value="F:ATP binding"/>
    <property type="evidence" value="ECO:0007669"/>
    <property type="project" value="UniProtKB-KW"/>
</dbReference>
<dbReference type="GO" id="GO:0000049">
    <property type="term" value="F:tRNA binding"/>
    <property type="evidence" value="ECO:0007669"/>
    <property type="project" value="UniProtKB-KW"/>
</dbReference>
<dbReference type="GO" id="GO:0103016">
    <property type="term" value="F:tRNA-uridine 2-sulfurtransferase activity"/>
    <property type="evidence" value="ECO:0007669"/>
    <property type="project" value="UniProtKB-EC"/>
</dbReference>
<dbReference type="GO" id="GO:0002143">
    <property type="term" value="P:tRNA wobble position uridine thiolation"/>
    <property type="evidence" value="ECO:0007669"/>
    <property type="project" value="TreeGrafter"/>
</dbReference>
<dbReference type="CDD" id="cd01998">
    <property type="entry name" value="MnmA_TRMU-like"/>
    <property type="match status" value="1"/>
</dbReference>
<dbReference type="FunFam" id="2.30.30.280:FF:000001">
    <property type="entry name" value="tRNA-specific 2-thiouridylase MnmA"/>
    <property type="match status" value="1"/>
</dbReference>
<dbReference type="FunFam" id="3.40.50.620:FF:000057">
    <property type="entry name" value="tRNA-specific 2-thiouridylase MnmA"/>
    <property type="match status" value="1"/>
</dbReference>
<dbReference type="Gene3D" id="2.30.30.280">
    <property type="entry name" value="Adenine nucleotide alpha hydrolases-like domains"/>
    <property type="match status" value="1"/>
</dbReference>
<dbReference type="Gene3D" id="3.40.50.620">
    <property type="entry name" value="HUPs"/>
    <property type="match status" value="1"/>
</dbReference>
<dbReference type="Gene3D" id="2.40.30.10">
    <property type="entry name" value="Translation factors"/>
    <property type="match status" value="1"/>
</dbReference>
<dbReference type="HAMAP" id="MF_00144">
    <property type="entry name" value="tRNA_thiouridyl_MnmA"/>
    <property type="match status" value="1"/>
</dbReference>
<dbReference type="InterPro" id="IPR004506">
    <property type="entry name" value="MnmA-like"/>
</dbReference>
<dbReference type="InterPro" id="IPR046885">
    <property type="entry name" value="MnmA-like_C"/>
</dbReference>
<dbReference type="InterPro" id="IPR046884">
    <property type="entry name" value="MnmA-like_central"/>
</dbReference>
<dbReference type="InterPro" id="IPR023382">
    <property type="entry name" value="MnmA-like_central_sf"/>
</dbReference>
<dbReference type="InterPro" id="IPR014729">
    <property type="entry name" value="Rossmann-like_a/b/a_fold"/>
</dbReference>
<dbReference type="NCBIfam" id="NF001138">
    <property type="entry name" value="PRK00143.1"/>
    <property type="match status" value="1"/>
</dbReference>
<dbReference type="NCBIfam" id="TIGR00420">
    <property type="entry name" value="trmU"/>
    <property type="match status" value="1"/>
</dbReference>
<dbReference type="PANTHER" id="PTHR11933:SF5">
    <property type="entry name" value="MITOCHONDRIAL TRNA-SPECIFIC 2-THIOURIDYLASE 1"/>
    <property type="match status" value="1"/>
</dbReference>
<dbReference type="PANTHER" id="PTHR11933">
    <property type="entry name" value="TRNA 5-METHYLAMINOMETHYL-2-THIOURIDYLATE -METHYLTRANSFERASE"/>
    <property type="match status" value="1"/>
</dbReference>
<dbReference type="Pfam" id="PF03054">
    <property type="entry name" value="tRNA_Me_trans"/>
    <property type="match status" value="1"/>
</dbReference>
<dbReference type="Pfam" id="PF20258">
    <property type="entry name" value="tRNA_Me_trans_C"/>
    <property type="match status" value="1"/>
</dbReference>
<dbReference type="Pfam" id="PF20259">
    <property type="entry name" value="tRNA_Me_trans_M"/>
    <property type="match status" value="1"/>
</dbReference>
<dbReference type="SUPFAM" id="SSF52402">
    <property type="entry name" value="Adenine nucleotide alpha hydrolases-like"/>
    <property type="match status" value="1"/>
</dbReference>